<name>H2B2A_MELV</name>
<gene>
    <name evidence="5" type="ORF">MEL_369</name>
</gene>
<keyword id="KW-0002">3D-structure</keyword>
<keyword id="KW-0226">DNA condensation</keyword>
<keyword id="KW-1035">Host cytoplasm</keyword>
<keyword id="KW-1048">Host nucleus</keyword>
<keyword id="KW-0946">Virion</keyword>
<accession>A0A097I2B5</accession>
<organism>
    <name type="scientific">Melbournevirus</name>
    <name type="common">MelV</name>
    <dbReference type="NCBI Taxonomy" id="1560514"/>
    <lineage>
        <taxon>Viruses</taxon>
        <taxon>Varidnaviria</taxon>
        <taxon>Bamfordvirae</taxon>
        <taxon>Nucleocytoviricota</taxon>
        <taxon>Megaviricetes</taxon>
        <taxon>Pimascovirales</taxon>
        <taxon>Marseilleviridae</taxon>
        <taxon>Marseillevirus</taxon>
    </lineage>
</organism>
<proteinExistence type="evidence at protein level"/>
<sequence length="269" mass="28829">MATQKETTRKRDKSVNFRLGLRNMLAQIHPDISVQTEALSELSNIAVFLGKKISHGAVTLLPEGTKTIKSSAVLLAAGDLYGKDLGRHAVGEMTKAVTRYGSAKESKEGSRSSKAKLQISVARSERLLREHGGCSRVSEGAAVALAAAIEYFMGEVLELAGNAARDSKKVRISVKHITLAIQNDAALFAVVGKGVFSGAGVSLISVPIPRKKARKTTEKEASSPKKKAAPKKKKAASKQKKSLSDKELAKLTKKELAKYEKEQGMSPGY</sequence>
<protein>
    <recommendedName>
        <fullName evidence="3">Histone doublet H2B-H2A</fullName>
    </recommendedName>
    <alternativeName>
        <fullName evidence="3">Histone H2B-H2A fusion protein</fullName>
    </alternativeName>
    <alternativeName>
        <fullName evidence="3">MV-H2B-H2A</fullName>
    </alternativeName>
</protein>
<feature type="chain" id="PRO_0000454837" description="Histone doublet H2B-H2A">
    <location>
        <begin position="1"/>
        <end position="269"/>
    </location>
</feature>
<feature type="region of interest" description="Histone fold" evidence="4">
    <location>
        <begin position="1"/>
        <end position="168"/>
    </location>
</feature>
<feature type="region of interest" description="Disordered" evidence="1">
    <location>
        <begin position="210"/>
        <end position="249"/>
    </location>
</feature>
<feature type="compositionally biased region" description="Basic residues" evidence="1">
    <location>
        <begin position="224"/>
        <end position="241"/>
    </location>
</feature>
<feature type="helix" evidence="6">
    <location>
        <begin position="18"/>
        <end position="28"/>
    </location>
</feature>
<feature type="helix" evidence="6">
    <location>
        <begin position="36"/>
        <end position="60"/>
    </location>
</feature>
<feature type="helix" evidence="6">
    <location>
        <begin position="70"/>
        <end position="80"/>
    </location>
</feature>
<feature type="helix" evidence="6">
    <location>
        <begin position="84"/>
        <end position="102"/>
    </location>
</feature>
<evidence type="ECO:0000256" key="1">
    <source>
        <dbReference type="SAM" id="MobiDB-lite"/>
    </source>
</evidence>
<evidence type="ECO:0000269" key="2">
    <source>
    </source>
</evidence>
<evidence type="ECO:0000303" key="3">
    <source>
    </source>
</evidence>
<evidence type="ECO:0000305" key="4">
    <source>
    </source>
</evidence>
<evidence type="ECO:0000312" key="5">
    <source>
        <dbReference type="EMBL" id="AIT54982.1"/>
    </source>
</evidence>
<evidence type="ECO:0007829" key="6">
    <source>
        <dbReference type="PDB" id="7LV8"/>
    </source>
</evidence>
<reference key="1">
    <citation type="journal article" date="2014" name="J. Virol.">
        <title>Genome analysis of the first Marseilleviridae representative from Australia indicates that most of its genes contribute to virus fitness.</title>
        <authorList>
            <person name="Doutre G."/>
            <person name="Philippe N."/>
            <person name="Abergel C."/>
            <person name="Claverie J.M."/>
        </authorList>
    </citation>
    <scope>NUCLEOTIDE SEQUENCE [LARGE SCALE GENOMIC DNA]</scope>
</reference>
<reference key="2">
    <citation type="journal article" date="2021" name="Cell">
        <title>Virus-encoded histone doublets are essential and form nucleosome-like structures.</title>
        <authorList>
            <person name="Liu Y."/>
            <person name="Bisio H."/>
            <person name="Toner C.M."/>
            <person name="Jeudy S."/>
            <person name="Philippe N."/>
            <person name="Zhou K."/>
            <person name="Bowerman S."/>
            <person name="White A."/>
            <person name="Edwards G."/>
            <person name="Abergel C."/>
            <person name="Luger K."/>
        </authorList>
    </citation>
    <scope>FUNCTION</scope>
    <scope>SUBCELLULAR LOCATION</scope>
    <scope>INDUCTION</scope>
    <scope>DOMAIN</scope>
</reference>
<comment type="function">
    <text evidence="2">Histone-like protein that is recruited to viral factories during viral replication and participates in viral DNA packaging and virion production probably by forming unstable nucleosome-like particles (PubMed:34297924). May compact the viral DNA (PubMed:34297924).</text>
</comment>
<comment type="subcellular location">
    <subcellularLocation>
        <location evidence="2">Host nucleus</location>
    </subcellularLocation>
    <subcellularLocation>
        <location evidence="2">Host cytoplasm</location>
    </subcellularLocation>
    <subcellularLocation>
        <location evidence="2">Virion</location>
    </subcellularLocation>
    <text evidence="2">Localize to cytoplasmic viral factories after virus infection (PubMed:34297924). Also present in the nucleus but at much lower concentration (PubMed:34297924). The viral histones that localize in the nucleus apparently do not interact with host genomic DNA and can leave the nucleus to associate with the viral factory (PubMed:34297924).</text>
</comment>
<comment type="induction">
    <text evidence="2">Expression of viral histones begins 2-4 hpi and continues along the infectious cycle.</text>
</comment>
<comment type="domain">
    <text evidence="2">The N-terminus is similar to eukaryotic H2B, whereas the central region is similar to eukaryotic H2A.</text>
</comment>
<dbReference type="EMBL" id="KM275475">
    <property type="protein sequence ID" value="AIT54982.1"/>
    <property type="molecule type" value="Genomic_DNA"/>
</dbReference>
<dbReference type="RefSeq" id="YP_009094870.1">
    <property type="nucleotide sequence ID" value="NC_025412.1"/>
</dbReference>
<dbReference type="PDB" id="7LV8">
    <property type="method" value="EM"/>
    <property type="resolution" value="3.40 A"/>
    <property type="chains" value="D/H=1-104"/>
</dbReference>
<dbReference type="PDB" id="7N8N">
    <property type="method" value="EM"/>
    <property type="resolution" value="3.89 A"/>
    <property type="chains" value="B/D=2-269"/>
</dbReference>
<dbReference type="PDBsum" id="7LV8"/>
<dbReference type="PDBsum" id="7N8N"/>
<dbReference type="EMDB" id="EMD-24238"/>
<dbReference type="SMR" id="A0A097I2B5"/>
<dbReference type="GeneID" id="21012390"/>
<dbReference type="KEGG" id="vg:21012390"/>
<dbReference type="Proteomes" id="UP000207668">
    <property type="component" value="Genome"/>
</dbReference>
<dbReference type="GO" id="GO:0030430">
    <property type="term" value="C:host cell cytoplasm"/>
    <property type="evidence" value="ECO:0007669"/>
    <property type="project" value="UniProtKB-SubCell"/>
</dbReference>
<dbReference type="GO" id="GO:0042025">
    <property type="term" value="C:host cell nucleus"/>
    <property type="evidence" value="ECO:0007669"/>
    <property type="project" value="UniProtKB-SubCell"/>
</dbReference>
<dbReference type="GO" id="GO:0044423">
    <property type="term" value="C:virion component"/>
    <property type="evidence" value="ECO:0007669"/>
    <property type="project" value="UniProtKB-KW"/>
</dbReference>
<dbReference type="GO" id="GO:0003677">
    <property type="term" value="F:DNA binding"/>
    <property type="evidence" value="ECO:0007669"/>
    <property type="project" value="InterPro"/>
</dbReference>
<dbReference type="GO" id="GO:0046982">
    <property type="term" value="F:protein heterodimerization activity"/>
    <property type="evidence" value="ECO:0007669"/>
    <property type="project" value="InterPro"/>
</dbReference>
<dbReference type="GO" id="GO:0030527">
    <property type="term" value="F:structural constituent of chromatin"/>
    <property type="evidence" value="ECO:0007669"/>
    <property type="project" value="InterPro"/>
</dbReference>
<dbReference type="GO" id="GO:0030261">
    <property type="term" value="P:chromosome condensation"/>
    <property type="evidence" value="ECO:0007669"/>
    <property type="project" value="UniProtKB-KW"/>
</dbReference>
<dbReference type="CDD" id="cd00074">
    <property type="entry name" value="HFD_H2A"/>
    <property type="match status" value="1"/>
</dbReference>
<dbReference type="Gene3D" id="1.10.20.10">
    <property type="entry name" value="Histone, subunit A"/>
    <property type="match status" value="2"/>
</dbReference>
<dbReference type="InterPro" id="IPR009072">
    <property type="entry name" value="Histone-fold"/>
</dbReference>
<dbReference type="InterPro" id="IPR002119">
    <property type="entry name" value="Histone_H2A"/>
</dbReference>
<dbReference type="InterPro" id="IPR007125">
    <property type="entry name" value="Histone_H2A/H2B/H3"/>
</dbReference>
<dbReference type="PANTHER" id="PTHR23430">
    <property type="entry name" value="HISTONE H2A"/>
    <property type="match status" value="1"/>
</dbReference>
<dbReference type="Pfam" id="PF00125">
    <property type="entry name" value="Histone"/>
    <property type="match status" value="1"/>
</dbReference>
<dbReference type="PRINTS" id="PR00620">
    <property type="entry name" value="HISTONEH2A"/>
</dbReference>
<dbReference type="SMART" id="SM00414">
    <property type="entry name" value="H2A"/>
    <property type="match status" value="1"/>
</dbReference>
<dbReference type="SUPFAM" id="SSF47113">
    <property type="entry name" value="Histone-fold"/>
    <property type="match status" value="1"/>
</dbReference>